<protein>
    <recommendedName>
        <fullName evidence="1">DNA replication and repair protein RecF</fullName>
    </recommendedName>
</protein>
<dbReference type="EMBL" id="CP000140">
    <property type="protein sequence ID" value="ABR41989.1"/>
    <property type="molecule type" value="Genomic_DNA"/>
</dbReference>
<dbReference type="RefSeq" id="WP_005861599.1">
    <property type="nucleotide sequence ID" value="NC_009615.1"/>
</dbReference>
<dbReference type="SMR" id="A6L8H5"/>
<dbReference type="STRING" id="435591.BDI_0202"/>
<dbReference type="PaxDb" id="435591-BDI_0202"/>
<dbReference type="GeneID" id="93524370"/>
<dbReference type="KEGG" id="pdi:BDI_0202"/>
<dbReference type="eggNOG" id="COG1195">
    <property type="taxonomic scope" value="Bacteria"/>
</dbReference>
<dbReference type="HOGENOM" id="CLU_040267_0_1_10"/>
<dbReference type="BioCyc" id="PDIS435591:G1G5A-207-MONOMER"/>
<dbReference type="Proteomes" id="UP000000566">
    <property type="component" value="Chromosome"/>
</dbReference>
<dbReference type="GO" id="GO:0005737">
    <property type="term" value="C:cytoplasm"/>
    <property type="evidence" value="ECO:0007669"/>
    <property type="project" value="UniProtKB-SubCell"/>
</dbReference>
<dbReference type="GO" id="GO:0005524">
    <property type="term" value="F:ATP binding"/>
    <property type="evidence" value="ECO:0007669"/>
    <property type="project" value="UniProtKB-UniRule"/>
</dbReference>
<dbReference type="GO" id="GO:0003697">
    <property type="term" value="F:single-stranded DNA binding"/>
    <property type="evidence" value="ECO:0007669"/>
    <property type="project" value="UniProtKB-UniRule"/>
</dbReference>
<dbReference type="GO" id="GO:0006260">
    <property type="term" value="P:DNA replication"/>
    <property type="evidence" value="ECO:0007669"/>
    <property type="project" value="UniProtKB-UniRule"/>
</dbReference>
<dbReference type="GO" id="GO:0000731">
    <property type="term" value="P:DNA synthesis involved in DNA repair"/>
    <property type="evidence" value="ECO:0007669"/>
    <property type="project" value="TreeGrafter"/>
</dbReference>
<dbReference type="GO" id="GO:0006302">
    <property type="term" value="P:double-strand break repair"/>
    <property type="evidence" value="ECO:0007669"/>
    <property type="project" value="TreeGrafter"/>
</dbReference>
<dbReference type="GO" id="GO:0009432">
    <property type="term" value="P:SOS response"/>
    <property type="evidence" value="ECO:0007669"/>
    <property type="project" value="UniProtKB-UniRule"/>
</dbReference>
<dbReference type="Gene3D" id="3.40.50.300">
    <property type="entry name" value="P-loop containing nucleotide triphosphate hydrolases"/>
    <property type="match status" value="1"/>
</dbReference>
<dbReference type="Gene3D" id="1.20.1050.90">
    <property type="entry name" value="RecF/RecN/SMC, N-terminal domain"/>
    <property type="match status" value="1"/>
</dbReference>
<dbReference type="HAMAP" id="MF_00365">
    <property type="entry name" value="RecF"/>
    <property type="match status" value="1"/>
</dbReference>
<dbReference type="InterPro" id="IPR001238">
    <property type="entry name" value="DNA-binding_RecF"/>
</dbReference>
<dbReference type="InterPro" id="IPR018078">
    <property type="entry name" value="DNA-binding_RecF_CS"/>
</dbReference>
<dbReference type="InterPro" id="IPR027417">
    <property type="entry name" value="P-loop_NTPase"/>
</dbReference>
<dbReference type="InterPro" id="IPR003395">
    <property type="entry name" value="RecF/RecN/SMC_N"/>
</dbReference>
<dbReference type="InterPro" id="IPR042174">
    <property type="entry name" value="RecF_2"/>
</dbReference>
<dbReference type="NCBIfam" id="TIGR00611">
    <property type="entry name" value="recf"/>
    <property type="match status" value="1"/>
</dbReference>
<dbReference type="PANTHER" id="PTHR32182">
    <property type="entry name" value="DNA REPLICATION AND REPAIR PROTEIN RECF"/>
    <property type="match status" value="1"/>
</dbReference>
<dbReference type="PANTHER" id="PTHR32182:SF0">
    <property type="entry name" value="DNA REPLICATION AND REPAIR PROTEIN RECF"/>
    <property type="match status" value="1"/>
</dbReference>
<dbReference type="Pfam" id="PF02463">
    <property type="entry name" value="SMC_N"/>
    <property type="match status" value="1"/>
</dbReference>
<dbReference type="SUPFAM" id="SSF52540">
    <property type="entry name" value="P-loop containing nucleoside triphosphate hydrolases"/>
    <property type="match status" value="1"/>
</dbReference>
<dbReference type="PROSITE" id="PS00617">
    <property type="entry name" value="RECF_1"/>
    <property type="match status" value="1"/>
</dbReference>
<dbReference type="PROSITE" id="PS00618">
    <property type="entry name" value="RECF_2"/>
    <property type="match status" value="1"/>
</dbReference>
<proteinExistence type="inferred from homology"/>
<comment type="function">
    <text evidence="1">The RecF protein is involved in DNA metabolism; it is required for DNA replication and normal SOS inducibility. RecF binds preferentially to single-stranded, linear DNA. It also seems to bind ATP.</text>
</comment>
<comment type="subcellular location">
    <subcellularLocation>
        <location evidence="1">Cytoplasm</location>
    </subcellularLocation>
</comment>
<comment type="similarity">
    <text evidence="1">Belongs to the RecF family.</text>
</comment>
<gene>
    <name evidence="1" type="primary">recF</name>
    <name type="ordered locus">BDI_0202</name>
</gene>
<reference key="1">
    <citation type="journal article" date="2007" name="PLoS Biol.">
        <title>Evolution of symbiotic bacteria in the distal human intestine.</title>
        <authorList>
            <person name="Xu J."/>
            <person name="Mahowald M.A."/>
            <person name="Ley R.E."/>
            <person name="Lozupone C.A."/>
            <person name="Hamady M."/>
            <person name="Martens E.C."/>
            <person name="Henrissat B."/>
            <person name="Coutinho P.M."/>
            <person name="Minx P."/>
            <person name="Latreille P."/>
            <person name="Cordum H."/>
            <person name="Van Brunt A."/>
            <person name="Kim K."/>
            <person name="Fulton R.S."/>
            <person name="Fulton L.A."/>
            <person name="Clifton S.W."/>
            <person name="Wilson R.K."/>
            <person name="Knight R.D."/>
            <person name="Gordon J.I."/>
        </authorList>
    </citation>
    <scope>NUCLEOTIDE SEQUENCE [LARGE SCALE GENOMIC DNA]</scope>
    <source>
        <strain>ATCC 8503 / DSM 20701 / CIP 104284 / JCM 5825 / NCTC 11152</strain>
    </source>
</reference>
<name>RECF_PARD8</name>
<keyword id="KW-0067">ATP-binding</keyword>
<keyword id="KW-0963">Cytoplasm</keyword>
<keyword id="KW-0227">DNA damage</keyword>
<keyword id="KW-0234">DNA repair</keyword>
<keyword id="KW-0235">DNA replication</keyword>
<keyword id="KW-0238">DNA-binding</keyword>
<keyword id="KW-0547">Nucleotide-binding</keyword>
<keyword id="KW-1185">Reference proteome</keyword>
<keyword id="KW-0742">SOS response</keyword>
<evidence type="ECO:0000255" key="1">
    <source>
        <dbReference type="HAMAP-Rule" id="MF_00365"/>
    </source>
</evidence>
<organism>
    <name type="scientific">Parabacteroides distasonis (strain ATCC 8503 / DSM 20701 / CIP 104284 / JCM 5825 / NCTC 11152)</name>
    <dbReference type="NCBI Taxonomy" id="435591"/>
    <lineage>
        <taxon>Bacteria</taxon>
        <taxon>Pseudomonadati</taxon>
        <taxon>Bacteroidota</taxon>
        <taxon>Bacteroidia</taxon>
        <taxon>Bacteroidales</taxon>
        <taxon>Tannerellaceae</taxon>
        <taxon>Parabacteroides</taxon>
    </lineage>
</organism>
<feature type="chain" id="PRO_1000048552" description="DNA replication and repair protein RecF">
    <location>
        <begin position="1"/>
        <end position="365"/>
    </location>
</feature>
<feature type="binding site" evidence="1">
    <location>
        <begin position="30"/>
        <end position="37"/>
    </location>
    <ligand>
        <name>ATP</name>
        <dbReference type="ChEBI" id="CHEBI:30616"/>
    </ligand>
</feature>
<sequence>MILKKLSVLNYKNILQSEVIFSPKMNCFFGNNGMGKTNLLDAIHYLSFCKSHVNTPDSQIINSDQDLCVVQGNYDYEGREEEIFCAMRRRQRKQFKRNKKEYDKLSEHIGLLPLVMVSPADADLIRGGSDERRRFLDLIISQQDKPYLHALIQYNKALLQRNTLLKDQSMDASLYEVLEMQLGMYGQIVYEKRKKLVEDFTPIFNEYYQTICGSAEEVGLHYISQLEETELAGKLAMSRERDRILGYTSSGIHKDELEMTLGGYLIRRVGSQGQNKTYLIALKLAQFAFLNKRGQTTPILLLDDIFDKLDASRVEQIIKLVSENGFGQIFITDTNRKYLDEILLAMNHDYALFRVERGEVQPMEE</sequence>
<accession>A6L8H5</accession>